<protein>
    <recommendedName>
        <fullName>Probable beta-glucosidase G</fullName>
        <ecNumber>3.2.1.21</ecNumber>
    </recommendedName>
    <alternativeName>
        <fullName>Beta-D-glucoside glucohydrolase G</fullName>
    </alternativeName>
    <alternativeName>
        <fullName>Cellobiase G</fullName>
    </alternativeName>
    <alternativeName>
        <fullName>Gentiobiase G</fullName>
    </alternativeName>
</protein>
<keyword id="KW-0119">Carbohydrate metabolism</keyword>
<keyword id="KW-0136">Cellulose degradation</keyword>
<keyword id="KW-0325">Glycoprotein</keyword>
<keyword id="KW-0326">Glycosidase</keyword>
<keyword id="KW-0378">Hydrolase</keyword>
<keyword id="KW-0624">Polysaccharide degradation</keyword>
<keyword id="KW-1185">Reference proteome</keyword>
<keyword id="KW-0964">Secreted</keyword>
<keyword id="KW-0732">Signal</keyword>
<evidence type="ECO:0000250" key="1"/>
<evidence type="ECO:0000255" key="2"/>
<evidence type="ECO:0000305" key="3"/>
<feature type="signal peptide" evidence="2">
    <location>
        <begin position="1"/>
        <end position="20"/>
    </location>
</feature>
<feature type="chain" id="PRO_0000394117" description="Probable beta-glucosidase G">
    <location>
        <begin position="21"/>
        <end position="815"/>
    </location>
</feature>
<feature type="active site" evidence="1">
    <location>
        <position position="304"/>
    </location>
</feature>
<feature type="glycosylation site" description="N-linked (GlcNAc...) asparagine" evidence="2">
    <location>
        <position position="40"/>
    </location>
</feature>
<feature type="glycosylation site" description="N-linked (GlcNAc...) asparagine" evidence="2">
    <location>
        <position position="58"/>
    </location>
</feature>
<feature type="glycosylation site" description="N-linked (GlcNAc...) asparagine" evidence="2">
    <location>
        <position position="229"/>
    </location>
</feature>
<feature type="glycosylation site" description="N-linked (GlcNAc...) asparagine" evidence="2">
    <location>
        <position position="276"/>
    </location>
</feature>
<feature type="glycosylation site" description="N-linked (GlcNAc...) asparagine" evidence="2">
    <location>
        <position position="343"/>
    </location>
</feature>
<feature type="glycosylation site" description="N-linked (GlcNAc...) asparagine" evidence="2">
    <location>
        <position position="350"/>
    </location>
</feature>
<feature type="glycosylation site" description="N-linked (GlcNAc...) asparagine" evidence="2">
    <location>
        <position position="402"/>
    </location>
</feature>
<feature type="glycosylation site" description="N-linked (GlcNAc...) asparagine" evidence="2">
    <location>
        <position position="507"/>
    </location>
</feature>
<feature type="glycosylation site" description="N-linked (GlcNAc...) asparagine" evidence="2">
    <location>
        <position position="563"/>
    </location>
</feature>
<feature type="glycosylation site" description="N-linked (GlcNAc...) asparagine" evidence="2">
    <location>
        <position position="584"/>
    </location>
</feature>
<feature type="glycosylation site" description="N-linked (GlcNAc...) asparagine" evidence="2">
    <location>
        <position position="623"/>
    </location>
</feature>
<feature type="glycosylation site" description="N-linked (GlcNAc...) asparagine" evidence="2">
    <location>
        <position position="662"/>
    </location>
</feature>
<feature type="glycosylation site" description="N-linked (GlcNAc...) asparagine" evidence="2">
    <location>
        <position position="715"/>
    </location>
</feature>
<name>BGLG_ASPOR</name>
<proteinExistence type="inferred from homology"/>
<comment type="function">
    <text evidence="1">Beta-glucosidases are one of a number of cellulolytic enzymes involved in the degradation of cellulosic biomass. Catalyzes the last step releasing glucose from the inhibitory cellobiose (By similarity).</text>
</comment>
<comment type="catalytic activity">
    <reaction>
        <text>Hydrolysis of terminal, non-reducing beta-D-glucosyl residues with release of beta-D-glucose.</text>
        <dbReference type="EC" id="3.2.1.21"/>
    </reaction>
</comment>
<comment type="pathway">
    <text>Glycan metabolism; cellulose degradation.</text>
</comment>
<comment type="subcellular location">
    <subcellularLocation>
        <location evidence="1">Secreted</location>
    </subcellularLocation>
</comment>
<comment type="similarity">
    <text evidence="3">Belongs to the glycosyl hydrolase 3 family.</text>
</comment>
<sequence length="815" mass="87701">MASIAHLVVSGLLAATAVNGQNYGGSGRSDDAFSYVQPRNTTILGQYGHSPAVLPSPNATGAGGWEEALAKAQQFVAQLTLEEKADMVTGQPGPCVGNIVAIPRLGFKGLCLQDGPLAIRVADYASVFSAGVTAASTWDKDILYERGVAMGEEFKGKGAHVALGPVAGPLGRSGYGGRNWEGFAADPYLTGVAMERTIQGYQDAGVQACAKHFIGNEQETQRNPNYNPNGTLTDVIQEAISSNIDDRTIHELYLWPFANAARAKVASVMCSYQRLNGSYACQNSKVLNGLLKEELGFQGYVQSDWGGTHSGVSSIEGGLDMNMPGGLGQYGQTPEAGSFFGKNVTFAVNNGTVDISRVDDMIVRIMTPYYWLGQDQGYPEIDPSSADLNTFSPRSTWLREFNLTGERSRDVRGDHGELIRRHGAEATILLKNENKALPLKAPKSIAVFGNDAGDTTEGAVNKATFEFGTLAAGGGSGTGRFTYLVTPLEALKARGKQDNTLVQWWLNNTLIADSDVTSLWVPTPPDACLVFLKTWAEEGSDREYLSVDWNGNEVVDSVASKCNNTIVVTHSSGINELPFANHPNVTAIVAAHYPGQESGNSIVDILYGDVNPSGKLPYTIAKNGSDYNAPPTTAVETTGADDWQAWFDEKLEIDYRYFDAHNISVLYEFGFGLSYTTFSLSDIKTEPLAESISSVPEQLPIQPGGNPALWESVYNVSVTVTNTGDVKGATVPQLYVTFPDSAPAGTPPKQLRGFDKVSLAPGESQTVGFELMRRDLSYWDVVSQEWLIPEGEFTIRVGFSSRDLSQETKITPVTA</sequence>
<dbReference type="EC" id="3.2.1.21"/>
<dbReference type="EMBL" id="BA000054">
    <property type="protein sequence ID" value="BAE64040.1"/>
    <property type="molecule type" value="Genomic_DNA"/>
</dbReference>
<dbReference type="RefSeq" id="XP_001825173.1">
    <property type="nucleotide sequence ID" value="XM_001825121.1"/>
</dbReference>
<dbReference type="SMR" id="Q2U325"/>
<dbReference type="STRING" id="510516.Q2U325"/>
<dbReference type="CAZy" id="GH3">
    <property type="family name" value="Glycoside Hydrolase Family 3"/>
</dbReference>
<dbReference type="GlyCosmos" id="Q2U325">
    <property type="glycosylation" value="13 sites, No reported glycans"/>
</dbReference>
<dbReference type="EnsemblFungi" id="BAE64040">
    <property type="protein sequence ID" value="BAE64040"/>
    <property type="gene ID" value="AO090038000223"/>
</dbReference>
<dbReference type="GeneID" id="5997268"/>
<dbReference type="KEGG" id="aor:AO090038000223"/>
<dbReference type="VEuPathDB" id="FungiDB:AO090038000223"/>
<dbReference type="HOGENOM" id="CLU_004542_2_3_1"/>
<dbReference type="OMA" id="YERGYAM"/>
<dbReference type="OrthoDB" id="47163at5052"/>
<dbReference type="UniPathway" id="UPA00696"/>
<dbReference type="Proteomes" id="UP000006564">
    <property type="component" value="Chromosome 6"/>
</dbReference>
<dbReference type="GO" id="GO:0005615">
    <property type="term" value="C:extracellular space"/>
    <property type="evidence" value="ECO:0000314"/>
    <property type="project" value="AspGD"/>
</dbReference>
<dbReference type="GO" id="GO:0008422">
    <property type="term" value="F:beta-glucosidase activity"/>
    <property type="evidence" value="ECO:0000314"/>
    <property type="project" value="AspGD"/>
</dbReference>
<dbReference type="GO" id="GO:0005975">
    <property type="term" value="P:carbohydrate metabolic process"/>
    <property type="evidence" value="ECO:0000314"/>
    <property type="project" value="AspGD"/>
</dbReference>
<dbReference type="GO" id="GO:0030245">
    <property type="term" value="P:cellulose catabolic process"/>
    <property type="evidence" value="ECO:0007669"/>
    <property type="project" value="UniProtKB-UniPathway"/>
</dbReference>
<dbReference type="FunFam" id="2.60.40.10:FF:000757">
    <property type="entry name" value="Beta-glucosidase G"/>
    <property type="match status" value="1"/>
</dbReference>
<dbReference type="FunFam" id="3.20.20.300:FF:000002">
    <property type="entry name" value="Probable beta-glucosidase"/>
    <property type="match status" value="1"/>
</dbReference>
<dbReference type="FunFam" id="3.40.50.1700:FF:000003">
    <property type="entry name" value="Probable beta-glucosidase"/>
    <property type="match status" value="1"/>
</dbReference>
<dbReference type="Gene3D" id="3.40.50.1700">
    <property type="entry name" value="Glycoside hydrolase family 3 C-terminal domain"/>
    <property type="match status" value="1"/>
</dbReference>
<dbReference type="Gene3D" id="3.20.20.300">
    <property type="entry name" value="Glycoside hydrolase, family 3, N-terminal domain"/>
    <property type="match status" value="1"/>
</dbReference>
<dbReference type="Gene3D" id="2.60.40.10">
    <property type="entry name" value="Immunoglobulins"/>
    <property type="match status" value="1"/>
</dbReference>
<dbReference type="InterPro" id="IPR050288">
    <property type="entry name" value="Cellulose_deg_GH3"/>
</dbReference>
<dbReference type="InterPro" id="IPR026891">
    <property type="entry name" value="Fn3-like"/>
</dbReference>
<dbReference type="InterPro" id="IPR002772">
    <property type="entry name" value="Glyco_hydro_3_C"/>
</dbReference>
<dbReference type="InterPro" id="IPR036881">
    <property type="entry name" value="Glyco_hydro_3_C_sf"/>
</dbReference>
<dbReference type="InterPro" id="IPR001764">
    <property type="entry name" value="Glyco_hydro_3_N"/>
</dbReference>
<dbReference type="InterPro" id="IPR036962">
    <property type="entry name" value="Glyco_hydro_3_N_sf"/>
</dbReference>
<dbReference type="InterPro" id="IPR017853">
    <property type="entry name" value="Glycoside_hydrolase_SF"/>
</dbReference>
<dbReference type="InterPro" id="IPR013783">
    <property type="entry name" value="Ig-like_fold"/>
</dbReference>
<dbReference type="PANTHER" id="PTHR42715">
    <property type="entry name" value="BETA-GLUCOSIDASE"/>
    <property type="match status" value="1"/>
</dbReference>
<dbReference type="PANTHER" id="PTHR42715:SF12">
    <property type="entry name" value="BETA-GLUCOSIDASE G-RELATED"/>
    <property type="match status" value="1"/>
</dbReference>
<dbReference type="Pfam" id="PF14310">
    <property type="entry name" value="Fn3-like"/>
    <property type="match status" value="1"/>
</dbReference>
<dbReference type="Pfam" id="PF00933">
    <property type="entry name" value="Glyco_hydro_3"/>
    <property type="match status" value="1"/>
</dbReference>
<dbReference type="Pfam" id="PF01915">
    <property type="entry name" value="Glyco_hydro_3_C"/>
    <property type="match status" value="1"/>
</dbReference>
<dbReference type="PRINTS" id="PR00133">
    <property type="entry name" value="GLHYDRLASE3"/>
</dbReference>
<dbReference type="SMART" id="SM01217">
    <property type="entry name" value="Fn3_like"/>
    <property type="match status" value="1"/>
</dbReference>
<dbReference type="SUPFAM" id="SSF51445">
    <property type="entry name" value="(Trans)glycosidases"/>
    <property type="match status" value="1"/>
</dbReference>
<dbReference type="SUPFAM" id="SSF52279">
    <property type="entry name" value="Beta-D-glucan exohydrolase, C-terminal domain"/>
    <property type="match status" value="1"/>
</dbReference>
<gene>
    <name type="primary">bglG</name>
    <name type="ORF">AO090038000223</name>
</gene>
<reference key="1">
    <citation type="journal article" date="2005" name="Nature">
        <title>Genome sequencing and analysis of Aspergillus oryzae.</title>
        <authorList>
            <person name="Machida M."/>
            <person name="Asai K."/>
            <person name="Sano M."/>
            <person name="Tanaka T."/>
            <person name="Kumagai T."/>
            <person name="Terai G."/>
            <person name="Kusumoto K."/>
            <person name="Arima T."/>
            <person name="Akita O."/>
            <person name="Kashiwagi Y."/>
            <person name="Abe K."/>
            <person name="Gomi K."/>
            <person name="Horiuchi H."/>
            <person name="Kitamoto K."/>
            <person name="Kobayashi T."/>
            <person name="Takeuchi M."/>
            <person name="Denning D.W."/>
            <person name="Galagan J.E."/>
            <person name="Nierman W.C."/>
            <person name="Yu J."/>
            <person name="Archer D.B."/>
            <person name="Bennett J.W."/>
            <person name="Bhatnagar D."/>
            <person name="Cleveland T.E."/>
            <person name="Fedorova N.D."/>
            <person name="Gotoh O."/>
            <person name="Horikawa H."/>
            <person name="Hosoyama A."/>
            <person name="Ichinomiya M."/>
            <person name="Igarashi R."/>
            <person name="Iwashita K."/>
            <person name="Juvvadi P.R."/>
            <person name="Kato M."/>
            <person name="Kato Y."/>
            <person name="Kin T."/>
            <person name="Kokubun A."/>
            <person name="Maeda H."/>
            <person name="Maeyama N."/>
            <person name="Maruyama J."/>
            <person name="Nagasaki H."/>
            <person name="Nakajima T."/>
            <person name="Oda K."/>
            <person name="Okada K."/>
            <person name="Paulsen I."/>
            <person name="Sakamoto K."/>
            <person name="Sawano T."/>
            <person name="Takahashi M."/>
            <person name="Takase K."/>
            <person name="Terabayashi Y."/>
            <person name="Wortman J.R."/>
            <person name="Yamada O."/>
            <person name="Yamagata Y."/>
            <person name="Anazawa H."/>
            <person name="Hata Y."/>
            <person name="Koide Y."/>
            <person name="Komori T."/>
            <person name="Koyama Y."/>
            <person name="Minetoki T."/>
            <person name="Suharnan S."/>
            <person name="Tanaka A."/>
            <person name="Isono K."/>
            <person name="Kuhara S."/>
            <person name="Ogasawara N."/>
            <person name="Kikuchi H."/>
        </authorList>
    </citation>
    <scope>NUCLEOTIDE SEQUENCE [LARGE SCALE GENOMIC DNA]</scope>
    <source>
        <strain>ATCC 42149 / RIB 40</strain>
    </source>
</reference>
<organism>
    <name type="scientific">Aspergillus oryzae (strain ATCC 42149 / RIB 40)</name>
    <name type="common">Yellow koji mold</name>
    <dbReference type="NCBI Taxonomy" id="510516"/>
    <lineage>
        <taxon>Eukaryota</taxon>
        <taxon>Fungi</taxon>
        <taxon>Dikarya</taxon>
        <taxon>Ascomycota</taxon>
        <taxon>Pezizomycotina</taxon>
        <taxon>Eurotiomycetes</taxon>
        <taxon>Eurotiomycetidae</taxon>
        <taxon>Eurotiales</taxon>
        <taxon>Aspergillaceae</taxon>
        <taxon>Aspergillus</taxon>
        <taxon>Aspergillus subgen. Circumdati</taxon>
    </lineage>
</organism>
<accession>Q2U325</accession>